<feature type="chain" id="PRO_0000281051" description="Succinate dehydrogenase cytochrome b556 subunit">
    <location>
        <begin position="1"/>
        <end position="124"/>
    </location>
</feature>
<feature type="topological domain" description="Cytoplasmic" evidence="1">
    <location>
        <begin position="1"/>
        <end position="29"/>
    </location>
</feature>
<feature type="transmembrane region" description="Helical" evidence="1">
    <location>
        <begin position="30"/>
        <end position="55"/>
    </location>
</feature>
<feature type="topological domain" description="Periplasmic" evidence="1">
    <location>
        <begin position="56"/>
        <end position="67"/>
    </location>
</feature>
<feature type="transmembrane region" description="Helical" evidence="1">
    <location>
        <begin position="68"/>
        <end position="88"/>
    </location>
</feature>
<feature type="topological domain" description="Cytoplasmic" evidence="1">
    <location>
        <begin position="89"/>
        <end position="103"/>
    </location>
</feature>
<feature type="transmembrane region" description="Helical" evidence="1">
    <location>
        <begin position="104"/>
        <end position="124"/>
    </location>
</feature>
<feature type="binding site" description="axial binding residue" evidence="1">
    <location>
        <position position="83"/>
    </location>
    <ligand>
        <name>heme</name>
        <dbReference type="ChEBI" id="CHEBI:30413"/>
        <note>ligand shared with second transmembrane subunit</note>
    </ligand>
    <ligandPart>
        <name>Fe</name>
        <dbReference type="ChEBI" id="CHEBI:18248"/>
    </ligandPart>
</feature>
<sequence>MTKTKQEIYNKRPTSPHLSIYKLQISSTLSILHRMTGVALFFAVSILAWWLILSKYDNNYLQFANCCIIKICLVAVSYAWFYHLCNGIRHLFWDIGYGFSIKAVNITGWCVVVCSILLTMLLWV</sequence>
<proteinExistence type="inferred from homology"/>
<evidence type="ECO:0000250" key="1"/>
<evidence type="ECO:0000305" key="2"/>
<gene>
    <name type="primary">sdhC</name>
    <name type="ordered locus">RF_1163</name>
</gene>
<protein>
    <recommendedName>
        <fullName>Succinate dehydrogenase cytochrome b556 subunit</fullName>
        <shortName>Cytochrome b-556</shortName>
    </recommendedName>
</protein>
<organism>
    <name type="scientific">Rickettsia felis (strain ATCC VR-1525 / URRWXCal2)</name>
    <name type="common">Rickettsia azadi</name>
    <dbReference type="NCBI Taxonomy" id="315456"/>
    <lineage>
        <taxon>Bacteria</taxon>
        <taxon>Pseudomonadati</taxon>
        <taxon>Pseudomonadota</taxon>
        <taxon>Alphaproteobacteria</taxon>
        <taxon>Rickettsiales</taxon>
        <taxon>Rickettsiaceae</taxon>
        <taxon>Rickettsieae</taxon>
        <taxon>Rickettsia</taxon>
        <taxon>spotted fever group</taxon>
    </lineage>
</organism>
<accession>Q4UKC1</accession>
<name>DHSC_RICFE</name>
<comment type="function">
    <text evidence="1">Membrane-anchoring subunit of succinate dehydrogenase (SDH).</text>
</comment>
<comment type="cofactor">
    <cofactor evidence="1">
        <name>heme</name>
        <dbReference type="ChEBI" id="CHEBI:30413"/>
    </cofactor>
    <text evidence="1">The heme is bound between the two transmembrane subunits.</text>
</comment>
<comment type="pathway">
    <text>Carbohydrate metabolism; tricarboxylic acid cycle.</text>
</comment>
<comment type="subunit">
    <text evidence="1">Part of an enzyme complex containing four subunits: a flavoprotein, an iron-sulfur protein, plus two membrane-anchoring proteins, SdhC and SdhD. The complex can form homotrimers (By similarity).</text>
</comment>
<comment type="subcellular location">
    <subcellularLocation>
        <location>Cell inner membrane</location>
        <topology>Multi-pass membrane protein</topology>
    </subcellularLocation>
</comment>
<comment type="similarity">
    <text evidence="2">Belongs to the cytochrome b560 family.</text>
</comment>
<reference key="1">
    <citation type="journal article" date="2005" name="PLoS Biol.">
        <title>The genome sequence of Rickettsia felis identifies the first putative conjugative plasmid in an obligate intracellular parasite.</title>
        <authorList>
            <person name="Ogata H."/>
            <person name="Renesto P."/>
            <person name="Audic S."/>
            <person name="Robert C."/>
            <person name="Blanc G."/>
            <person name="Fournier P.-E."/>
            <person name="Parinello H."/>
            <person name="Claverie J.-M."/>
            <person name="Raoult D."/>
        </authorList>
    </citation>
    <scope>NUCLEOTIDE SEQUENCE [LARGE SCALE GENOMIC DNA]</scope>
    <source>
        <strain>ATCC VR-1525 / URRWXCal2</strain>
    </source>
</reference>
<keyword id="KW-0997">Cell inner membrane</keyword>
<keyword id="KW-1003">Cell membrane</keyword>
<keyword id="KW-0249">Electron transport</keyword>
<keyword id="KW-0349">Heme</keyword>
<keyword id="KW-0408">Iron</keyword>
<keyword id="KW-0472">Membrane</keyword>
<keyword id="KW-0479">Metal-binding</keyword>
<keyword id="KW-0812">Transmembrane</keyword>
<keyword id="KW-1133">Transmembrane helix</keyword>
<keyword id="KW-0813">Transport</keyword>
<keyword id="KW-0816">Tricarboxylic acid cycle</keyword>
<dbReference type="EMBL" id="CP000053">
    <property type="protein sequence ID" value="AAY62014.1"/>
    <property type="molecule type" value="Genomic_DNA"/>
</dbReference>
<dbReference type="SMR" id="Q4UKC1"/>
<dbReference type="STRING" id="315456.RF_1163"/>
<dbReference type="KEGG" id="rfe:RF_1163"/>
<dbReference type="eggNOG" id="COG2009">
    <property type="taxonomic scope" value="Bacteria"/>
</dbReference>
<dbReference type="HOGENOM" id="CLU_094691_3_1_5"/>
<dbReference type="OrthoDB" id="9799441at2"/>
<dbReference type="UniPathway" id="UPA00223"/>
<dbReference type="Proteomes" id="UP000008548">
    <property type="component" value="Chromosome"/>
</dbReference>
<dbReference type="GO" id="GO:0005886">
    <property type="term" value="C:plasma membrane"/>
    <property type="evidence" value="ECO:0007669"/>
    <property type="project" value="UniProtKB-SubCell"/>
</dbReference>
<dbReference type="GO" id="GO:0009055">
    <property type="term" value="F:electron transfer activity"/>
    <property type="evidence" value="ECO:0007669"/>
    <property type="project" value="InterPro"/>
</dbReference>
<dbReference type="GO" id="GO:0046872">
    <property type="term" value="F:metal ion binding"/>
    <property type="evidence" value="ECO:0007669"/>
    <property type="project" value="UniProtKB-KW"/>
</dbReference>
<dbReference type="GO" id="GO:0006099">
    <property type="term" value="P:tricarboxylic acid cycle"/>
    <property type="evidence" value="ECO:0007669"/>
    <property type="project" value="UniProtKB-UniPathway"/>
</dbReference>
<dbReference type="CDD" id="cd03499">
    <property type="entry name" value="SQR_TypeC_SdhC"/>
    <property type="match status" value="1"/>
</dbReference>
<dbReference type="Gene3D" id="1.20.1300.10">
    <property type="entry name" value="Fumarate reductase/succinate dehydrogenase, transmembrane subunit"/>
    <property type="match status" value="1"/>
</dbReference>
<dbReference type="InterPro" id="IPR034804">
    <property type="entry name" value="SQR/QFR_C/D"/>
</dbReference>
<dbReference type="InterPro" id="IPR018495">
    <property type="entry name" value="Succ_DH_cyt_bsu_CS"/>
</dbReference>
<dbReference type="InterPro" id="IPR014314">
    <property type="entry name" value="Succ_DH_cytb556"/>
</dbReference>
<dbReference type="InterPro" id="IPR000701">
    <property type="entry name" value="SuccDH_FuR_B_TM-su"/>
</dbReference>
<dbReference type="NCBIfam" id="TIGR02970">
    <property type="entry name" value="succ_dehyd_cytB"/>
    <property type="match status" value="1"/>
</dbReference>
<dbReference type="PANTHER" id="PTHR10978">
    <property type="entry name" value="SUCCINATE DEHYDROGENASE CYTOCHROME B560 SUBUNIT"/>
    <property type="match status" value="1"/>
</dbReference>
<dbReference type="PANTHER" id="PTHR10978:SF5">
    <property type="entry name" value="SUCCINATE DEHYDROGENASE CYTOCHROME B560 SUBUNIT, MITOCHONDRIAL"/>
    <property type="match status" value="1"/>
</dbReference>
<dbReference type="Pfam" id="PF01127">
    <property type="entry name" value="Sdh_cyt"/>
    <property type="match status" value="1"/>
</dbReference>
<dbReference type="PIRSF" id="PIRSF000178">
    <property type="entry name" value="SDH_cyt_b560"/>
    <property type="match status" value="1"/>
</dbReference>
<dbReference type="SUPFAM" id="SSF81343">
    <property type="entry name" value="Fumarate reductase respiratory complex transmembrane subunits"/>
    <property type="match status" value="1"/>
</dbReference>
<dbReference type="PROSITE" id="PS01000">
    <property type="entry name" value="SDH_CYT_1"/>
    <property type="match status" value="1"/>
</dbReference>
<dbReference type="PROSITE" id="PS01001">
    <property type="entry name" value="SDH_CYT_2"/>
    <property type="match status" value="1"/>
</dbReference>